<name>SP2AB_BACVZ</name>
<sequence>MKNEMHLEFSALSQNESFARVTVASFIAQLDPTMDELTEIKTVVSEAVTNAIIHGYEENCDGKVYISVTLEDHVVYLTIRDEGIGITDLEEARQPLFTTKPELERSGMGFTIMENFMDDVTIDSSPEMGTTIRLTKHLSKSKALCN</sequence>
<accession>A7Z692</accession>
<keyword id="KW-0067">ATP-binding</keyword>
<keyword id="KW-0418">Kinase</keyword>
<keyword id="KW-0547">Nucleotide-binding</keyword>
<keyword id="KW-0723">Serine/threonine-protein kinase</keyword>
<keyword id="KW-0749">Sporulation</keyword>
<keyword id="KW-0808">Transferase</keyword>
<comment type="function">
    <text evidence="1">Binds to sigma F and blocks its ability to form an RNA polymerase holoenzyme (E-sigma F). Phosphorylates SpoIIAA on a serine residue. This phosphorylation may enable SpoIIAA to act as an anti-anti-sigma factor that counteracts SpoIIAB and thus releases sigma F from inhibition.</text>
</comment>
<comment type="catalytic activity">
    <reaction evidence="1">
        <text>L-seryl-[protein] + ATP = O-phospho-L-seryl-[protein] + ADP + H(+)</text>
        <dbReference type="Rhea" id="RHEA:17989"/>
        <dbReference type="Rhea" id="RHEA-COMP:9863"/>
        <dbReference type="Rhea" id="RHEA-COMP:11604"/>
        <dbReference type="ChEBI" id="CHEBI:15378"/>
        <dbReference type="ChEBI" id="CHEBI:29999"/>
        <dbReference type="ChEBI" id="CHEBI:30616"/>
        <dbReference type="ChEBI" id="CHEBI:83421"/>
        <dbReference type="ChEBI" id="CHEBI:456216"/>
        <dbReference type="EC" id="2.7.11.1"/>
    </reaction>
</comment>
<comment type="catalytic activity">
    <reaction evidence="1">
        <text>L-threonyl-[protein] + ATP = O-phospho-L-threonyl-[protein] + ADP + H(+)</text>
        <dbReference type="Rhea" id="RHEA:46608"/>
        <dbReference type="Rhea" id="RHEA-COMP:11060"/>
        <dbReference type="Rhea" id="RHEA-COMP:11605"/>
        <dbReference type="ChEBI" id="CHEBI:15378"/>
        <dbReference type="ChEBI" id="CHEBI:30013"/>
        <dbReference type="ChEBI" id="CHEBI:30616"/>
        <dbReference type="ChEBI" id="CHEBI:61977"/>
        <dbReference type="ChEBI" id="CHEBI:456216"/>
        <dbReference type="EC" id="2.7.11.1"/>
    </reaction>
</comment>
<comment type="similarity">
    <text evidence="1">Belongs to the anti-sigma-factor family.</text>
</comment>
<feature type="chain" id="PRO_1000061444" description="Anti-sigma F factor">
    <location>
        <begin position="1"/>
        <end position="146"/>
    </location>
</feature>
<dbReference type="EC" id="2.7.11.1" evidence="1"/>
<dbReference type="EMBL" id="CP000560">
    <property type="protein sequence ID" value="ABS74518.1"/>
    <property type="molecule type" value="Genomic_DNA"/>
</dbReference>
<dbReference type="RefSeq" id="WP_012117895.1">
    <property type="nucleotide sequence ID" value="NC_009725.2"/>
</dbReference>
<dbReference type="SMR" id="A7Z692"/>
<dbReference type="GeneID" id="93081293"/>
<dbReference type="KEGG" id="bay:RBAM_021570"/>
<dbReference type="HOGENOM" id="CLU_090336_11_0_9"/>
<dbReference type="Proteomes" id="UP000001120">
    <property type="component" value="Chromosome"/>
</dbReference>
<dbReference type="GO" id="GO:0005524">
    <property type="term" value="F:ATP binding"/>
    <property type="evidence" value="ECO:0007669"/>
    <property type="project" value="UniProtKB-KW"/>
</dbReference>
<dbReference type="GO" id="GO:0106310">
    <property type="term" value="F:protein serine kinase activity"/>
    <property type="evidence" value="ECO:0007669"/>
    <property type="project" value="RHEA"/>
</dbReference>
<dbReference type="GO" id="GO:0004674">
    <property type="term" value="F:protein serine/threonine kinase activity"/>
    <property type="evidence" value="ECO:0007669"/>
    <property type="project" value="UniProtKB-KW"/>
</dbReference>
<dbReference type="GO" id="GO:0016989">
    <property type="term" value="F:sigma factor antagonist activity"/>
    <property type="evidence" value="ECO:0007669"/>
    <property type="project" value="InterPro"/>
</dbReference>
<dbReference type="GO" id="GO:0030436">
    <property type="term" value="P:asexual sporulation"/>
    <property type="evidence" value="ECO:0007669"/>
    <property type="project" value="UniProtKB-UniRule"/>
</dbReference>
<dbReference type="GO" id="GO:0042174">
    <property type="term" value="P:negative regulation of sporulation resulting in formation of a cellular spore"/>
    <property type="evidence" value="ECO:0007669"/>
    <property type="project" value="InterPro"/>
</dbReference>
<dbReference type="GO" id="GO:0030435">
    <property type="term" value="P:sporulation resulting in formation of a cellular spore"/>
    <property type="evidence" value="ECO:0007669"/>
    <property type="project" value="UniProtKB-KW"/>
</dbReference>
<dbReference type="Gene3D" id="3.30.565.10">
    <property type="entry name" value="Histidine kinase-like ATPase, C-terminal domain"/>
    <property type="match status" value="1"/>
</dbReference>
<dbReference type="HAMAP" id="MF_00637">
    <property type="entry name" value="Anti_sigma_F"/>
    <property type="match status" value="1"/>
</dbReference>
<dbReference type="InterPro" id="IPR050267">
    <property type="entry name" value="Anti-sigma-factor_SerPK"/>
</dbReference>
<dbReference type="InterPro" id="IPR010194">
    <property type="entry name" value="Anti-sigma_F"/>
</dbReference>
<dbReference type="InterPro" id="IPR036890">
    <property type="entry name" value="HATPase_C_sf"/>
</dbReference>
<dbReference type="NCBIfam" id="TIGR01925">
    <property type="entry name" value="spIIAB"/>
    <property type="match status" value="1"/>
</dbReference>
<dbReference type="PANTHER" id="PTHR35526:SF3">
    <property type="entry name" value="ANTI-SIGMA-F FACTOR RSBW"/>
    <property type="match status" value="1"/>
</dbReference>
<dbReference type="PANTHER" id="PTHR35526">
    <property type="entry name" value="ANTI-SIGMA-F FACTOR RSBW-RELATED"/>
    <property type="match status" value="1"/>
</dbReference>
<dbReference type="Pfam" id="PF13581">
    <property type="entry name" value="HATPase_c_2"/>
    <property type="match status" value="1"/>
</dbReference>
<dbReference type="SMART" id="SM00387">
    <property type="entry name" value="HATPase_c"/>
    <property type="match status" value="1"/>
</dbReference>
<dbReference type="SUPFAM" id="SSF55874">
    <property type="entry name" value="ATPase domain of HSP90 chaperone/DNA topoisomerase II/histidine kinase"/>
    <property type="match status" value="1"/>
</dbReference>
<gene>
    <name evidence="1" type="primary">spoIIAB</name>
    <name type="ordered locus">RBAM_021570</name>
</gene>
<reference key="1">
    <citation type="journal article" date="2007" name="Nat. Biotechnol.">
        <title>Comparative analysis of the complete genome sequence of the plant growth-promoting bacterium Bacillus amyloliquefaciens FZB42.</title>
        <authorList>
            <person name="Chen X.H."/>
            <person name="Koumoutsi A."/>
            <person name="Scholz R."/>
            <person name="Eisenreich A."/>
            <person name="Schneider K."/>
            <person name="Heinemeyer I."/>
            <person name="Morgenstern B."/>
            <person name="Voss B."/>
            <person name="Hess W.R."/>
            <person name="Reva O."/>
            <person name="Junge H."/>
            <person name="Voigt B."/>
            <person name="Jungblut P.R."/>
            <person name="Vater J."/>
            <person name="Suessmuth R."/>
            <person name="Liesegang H."/>
            <person name="Strittmatter A."/>
            <person name="Gottschalk G."/>
            <person name="Borriss R."/>
        </authorList>
    </citation>
    <scope>NUCLEOTIDE SEQUENCE [LARGE SCALE GENOMIC DNA]</scope>
    <source>
        <strain>DSM 23117 / BGSC 10A6 / LMG 26770 / FZB42</strain>
    </source>
</reference>
<protein>
    <recommendedName>
        <fullName evidence="1">Anti-sigma F factor</fullName>
        <ecNumber evidence="1">2.7.11.1</ecNumber>
    </recommendedName>
    <alternativeName>
        <fullName evidence="1">Stage II sporulation protein AB</fullName>
    </alternativeName>
</protein>
<proteinExistence type="inferred from homology"/>
<organism>
    <name type="scientific">Bacillus velezensis (strain DSM 23117 / BGSC 10A6 / LMG 26770 / FZB42)</name>
    <name type="common">Bacillus amyloliquefaciens subsp. plantarum</name>
    <dbReference type="NCBI Taxonomy" id="326423"/>
    <lineage>
        <taxon>Bacteria</taxon>
        <taxon>Bacillati</taxon>
        <taxon>Bacillota</taxon>
        <taxon>Bacilli</taxon>
        <taxon>Bacillales</taxon>
        <taxon>Bacillaceae</taxon>
        <taxon>Bacillus</taxon>
        <taxon>Bacillus amyloliquefaciens group</taxon>
    </lineage>
</organism>
<evidence type="ECO:0000255" key="1">
    <source>
        <dbReference type="HAMAP-Rule" id="MF_00637"/>
    </source>
</evidence>